<dbReference type="EMBL" id="AJ585891">
    <property type="protein sequence ID" value="CAE51532.1"/>
    <property type="molecule type" value="Genomic_DNA"/>
</dbReference>
<dbReference type="GO" id="GO:0009507">
    <property type="term" value="C:chloroplast"/>
    <property type="evidence" value="ECO:0007669"/>
    <property type="project" value="UniProtKB-SubCell"/>
</dbReference>
<dbReference type="GO" id="GO:0003723">
    <property type="term" value="F:RNA binding"/>
    <property type="evidence" value="ECO:0007669"/>
    <property type="project" value="UniProtKB-KW"/>
</dbReference>
<dbReference type="GO" id="GO:0006397">
    <property type="term" value="P:mRNA processing"/>
    <property type="evidence" value="ECO:0007669"/>
    <property type="project" value="UniProtKB-KW"/>
</dbReference>
<dbReference type="GO" id="GO:0008380">
    <property type="term" value="P:RNA splicing"/>
    <property type="evidence" value="ECO:0007669"/>
    <property type="project" value="UniProtKB-UniRule"/>
</dbReference>
<dbReference type="GO" id="GO:0008033">
    <property type="term" value="P:tRNA processing"/>
    <property type="evidence" value="ECO:0007669"/>
    <property type="project" value="UniProtKB-KW"/>
</dbReference>
<dbReference type="HAMAP" id="MF_01390">
    <property type="entry name" value="MatK"/>
    <property type="match status" value="1"/>
</dbReference>
<dbReference type="InterPro" id="IPR024937">
    <property type="entry name" value="Domain_X"/>
</dbReference>
<dbReference type="InterPro" id="IPR002866">
    <property type="entry name" value="Maturase_MatK"/>
</dbReference>
<dbReference type="InterPro" id="IPR024942">
    <property type="entry name" value="Maturase_MatK_N"/>
</dbReference>
<dbReference type="PANTHER" id="PTHR34811">
    <property type="entry name" value="MATURASE K"/>
    <property type="match status" value="1"/>
</dbReference>
<dbReference type="PANTHER" id="PTHR34811:SF1">
    <property type="entry name" value="MATURASE K"/>
    <property type="match status" value="1"/>
</dbReference>
<dbReference type="Pfam" id="PF01348">
    <property type="entry name" value="Intron_maturas2"/>
    <property type="match status" value="1"/>
</dbReference>
<dbReference type="Pfam" id="PF01824">
    <property type="entry name" value="MatK_N"/>
    <property type="match status" value="1"/>
</dbReference>
<reference key="1">
    <citation type="journal article" date="2004" name="Mol. Phylogenet. Evol.">
        <title>Phylogenetic relationships in Nicotiana (Solanaceae) inferred from multiple plastid regions.</title>
        <authorList>
            <person name="Clarkson J.J."/>
            <person name="Knapp S."/>
            <person name="Garcia V.F."/>
            <person name="Olmstead R.G."/>
            <person name="Leitch A.R."/>
            <person name="Chase M.W."/>
        </authorList>
    </citation>
    <scope>NUCLEOTIDE SEQUENCE [GENOMIC DNA]</scope>
</reference>
<accession>Q70CZ6</accession>
<name>MATK_CESEL</name>
<organism>
    <name type="scientific">Cestrum elegans</name>
    <name type="common">Red cestrum</name>
    <name type="synonym">Habrothamnus elegans</name>
    <dbReference type="NCBI Taxonomy" id="103475"/>
    <lineage>
        <taxon>Eukaryota</taxon>
        <taxon>Viridiplantae</taxon>
        <taxon>Streptophyta</taxon>
        <taxon>Embryophyta</taxon>
        <taxon>Tracheophyta</taxon>
        <taxon>Spermatophyta</taxon>
        <taxon>Magnoliopsida</taxon>
        <taxon>eudicotyledons</taxon>
        <taxon>Gunneridae</taxon>
        <taxon>Pentapetalae</taxon>
        <taxon>asterids</taxon>
        <taxon>lamiids</taxon>
        <taxon>Solanales</taxon>
        <taxon>Solanaceae</taxon>
        <taxon>Cestroideae</taxon>
        <taxon>Cestreae</taxon>
        <taxon>Cestrum</taxon>
    </lineage>
</organism>
<keyword id="KW-0150">Chloroplast</keyword>
<keyword id="KW-0507">mRNA processing</keyword>
<keyword id="KW-0934">Plastid</keyword>
<keyword id="KW-0694">RNA-binding</keyword>
<keyword id="KW-0819">tRNA processing</keyword>
<proteinExistence type="inferred from homology"/>
<geneLocation type="chloroplast"/>
<evidence type="ECO:0000255" key="1">
    <source>
        <dbReference type="HAMAP-Rule" id="MF_01390"/>
    </source>
</evidence>
<feature type="chain" id="PRO_0000143322" description="Maturase K">
    <location>
        <begin position="1"/>
        <end position="510"/>
    </location>
</feature>
<protein>
    <recommendedName>
        <fullName evidence="1">Maturase K</fullName>
    </recommendedName>
    <alternativeName>
        <fullName evidence="1">Intron maturase</fullName>
    </alternativeName>
</protein>
<sequence>MEEIQRYLQPDRSQQHNFLYPLIFQEYIYALAHDHGLNINRSILLENPGYNNQLSLLIVKRLITRMYPQNHFFICTNDSNQNPFLGCNKSLYSQMISEGFAFILEIPFSLQLISSSSLSLEGKNVFKSHNLRSIHSTFPFLEDNFSHLNYVLDILIPYPVHLEILXQTLRYWVKDASSLHLLRFFLHEYWNLNSLITPKKPGYSFSKKKKRFFFFLYNSYVYECESTFVFLRNQSYHLRSTSFGALLERIYFYGKIECLVEVFAKDFQXTLWLFKDPXMHYVRYQGKSILASKGTFLLMNKWKFYLVNFWQCHFSXCFETGRIHINQLSNHSRDFLGYLSSVRLNPSMVRSQILENSFLINNAIKKFDTLVPIIPLIGSLAKANFCTVLGHPISKPVWSDLSDSDIIDRFGRICRKLFHYYSGSSKKKTLYRIKYILRLSCGRTLARKHKSTVRAFLKRSGSELLEEFLTSEEQVLSLTFRRASSSLWGVYRNRIWYLDIFSINDLANYQ</sequence>
<comment type="function">
    <text evidence="1">Usually encoded in the trnK tRNA gene intron. Probably assists in splicing its own and other chloroplast group II introns.</text>
</comment>
<comment type="subcellular location">
    <subcellularLocation>
        <location>Plastid</location>
        <location>Chloroplast</location>
    </subcellularLocation>
</comment>
<comment type="similarity">
    <text evidence="1">Belongs to the intron maturase 2 family. MatK subfamily.</text>
</comment>
<gene>
    <name evidence="1" type="primary">matK</name>
</gene>